<proteinExistence type="inferred from homology"/>
<comment type="function">
    <text evidence="1">An aminoacyl-tRNA editing enzyme that deacylates mischarged D-aminoacyl-tRNAs. Also deacylates mischarged glycyl-tRNA(Ala), protecting cells against glycine mischarging by AlaRS. Acts via tRNA-based rather than protein-based catalysis; rejects L-amino acids rather than detecting D-amino acids in the active site. By recycling D-aminoacyl-tRNA to D-amino acids and free tRNA molecules, this enzyme counteracts the toxicity associated with the formation of D-aminoacyl-tRNA entities in vivo and helps enforce protein L-homochirality.</text>
</comment>
<comment type="catalytic activity">
    <reaction evidence="1">
        <text>glycyl-tRNA(Ala) + H2O = tRNA(Ala) + glycine + H(+)</text>
        <dbReference type="Rhea" id="RHEA:53744"/>
        <dbReference type="Rhea" id="RHEA-COMP:9657"/>
        <dbReference type="Rhea" id="RHEA-COMP:13640"/>
        <dbReference type="ChEBI" id="CHEBI:15377"/>
        <dbReference type="ChEBI" id="CHEBI:15378"/>
        <dbReference type="ChEBI" id="CHEBI:57305"/>
        <dbReference type="ChEBI" id="CHEBI:78442"/>
        <dbReference type="ChEBI" id="CHEBI:78522"/>
        <dbReference type="EC" id="3.1.1.96"/>
    </reaction>
</comment>
<comment type="catalytic activity">
    <reaction evidence="1">
        <text>a D-aminoacyl-tRNA + H2O = a tRNA + a D-alpha-amino acid + H(+)</text>
        <dbReference type="Rhea" id="RHEA:13953"/>
        <dbReference type="Rhea" id="RHEA-COMP:10123"/>
        <dbReference type="Rhea" id="RHEA-COMP:10124"/>
        <dbReference type="ChEBI" id="CHEBI:15377"/>
        <dbReference type="ChEBI" id="CHEBI:15378"/>
        <dbReference type="ChEBI" id="CHEBI:59871"/>
        <dbReference type="ChEBI" id="CHEBI:78442"/>
        <dbReference type="ChEBI" id="CHEBI:79333"/>
        <dbReference type="EC" id="3.1.1.96"/>
    </reaction>
</comment>
<comment type="subunit">
    <text evidence="1">Homodimer.</text>
</comment>
<comment type="subcellular location">
    <subcellularLocation>
        <location evidence="1">Cytoplasm</location>
    </subcellularLocation>
</comment>
<comment type="domain">
    <text evidence="1">A Gly-cisPro motif from one monomer fits into the active site of the other monomer to allow specific chiral rejection of L-amino acids.</text>
</comment>
<comment type="similarity">
    <text evidence="1">Belongs to the DTD family.</text>
</comment>
<protein>
    <recommendedName>
        <fullName evidence="1">D-aminoacyl-tRNA deacylase</fullName>
        <shortName evidence="1">DTD</shortName>
        <ecNumber evidence="1">3.1.1.96</ecNumber>
    </recommendedName>
    <alternativeName>
        <fullName evidence="1">Gly-tRNA(Ala) deacylase</fullName>
    </alternativeName>
</protein>
<gene>
    <name evidence="1" type="primary">dtd</name>
    <name type="ordered locus">SAK_1899</name>
</gene>
<evidence type="ECO:0000255" key="1">
    <source>
        <dbReference type="HAMAP-Rule" id="MF_00518"/>
    </source>
</evidence>
<accession>Q3JZ09</accession>
<organism>
    <name type="scientific">Streptococcus agalactiae serotype Ia (strain ATCC 27591 / A909 / CDC SS700)</name>
    <dbReference type="NCBI Taxonomy" id="205921"/>
    <lineage>
        <taxon>Bacteria</taxon>
        <taxon>Bacillati</taxon>
        <taxon>Bacillota</taxon>
        <taxon>Bacilli</taxon>
        <taxon>Lactobacillales</taxon>
        <taxon>Streptococcaceae</taxon>
        <taxon>Streptococcus</taxon>
    </lineage>
</organism>
<dbReference type="EC" id="3.1.1.96" evidence="1"/>
<dbReference type="EMBL" id="CP000114">
    <property type="protein sequence ID" value="ABA44629.1"/>
    <property type="molecule type" value="Genomic_DNA"/>
</dbReference>
<dbReference type="RefSeq" id="WP_000691432.1">
    <property type="nucleotide sequence ID" value="NC_007432.1"/>
</dbReference>
<dbReference type="SMR" id="Q3JZ09"/>
<dbReference type="KEGG" id="sak:SAK_1899"/>
<dbReference type="HOGENOM" id="CLU_076901_1_0_9"/>
<dbReference type="GO" id="GO:0005737">
    <property type="term" value="C:cytoplasm"/>
    <property type="evidence" value="ECO:0007669"/>
    <property type="project" value="UniProtKB-SubCell"/>
</dbReference>
<dbReference type="GO" id="GO:0051500">
    <property type="term" value="F:D-tyrosyl-tRNA(Tyr) deacylase activity"/>
    <property type="evidence" value="ECO:0007669"/>
    <property type="project" value="TreeGrafter"/>
</dbReference>
<dbReference type="GO" id="GO:0106026">
    <property type="term" value="F:Gly-tRNA(Ala) deacylase activity"/>
    <property type="evidence" value="ECO:0007669"/>
    <property type="project" value="UniProtKB-UniRule"/>
</dbReference>
<dbReference type="GO" id="GO:0043908">
    <property type="term" value="F:Ser(Gly)-tRNA(Ala) hydrolase activity"/>
    <property type="evidence" value="ECO:0007669"/>
    <property type="project" value="UniProtKB-UniRule"/>
</dbReference>
<dbReference type="GO" id="GO:0000049">
    <property type="term" value="F:tRNA binding"/>
    <property type="evidence" value="ECO:0007669"/>
    <property type="project" value="UniProtKB-UniRule"/>
</dbReference>
<dbReference type="GO" id="GO:0019478">
    <property type="term" value="P:D-amino acid catabolic process"/>
    <property type="evidence" value="ECO:0007669"/>
    <property type="project" value="UniProtKB-UniRule"/>
</dbReference>
<dbReference type="CDD" id="cd00563">
    <property type="entry name" value="Dtyr_deacylase"/>
    <property type="match status" value="1"/>
</dbReference>
<dbReference type="FunFam" id="3.50.80.10:FF:000001">
    <property type="entry name" value="D-aminoacyl-tRNA deacylase"/>
    <property type="match status" value="1"/>
</dbReference>
<dbReference type="Gene3D" id="3.50.80.10">
    <property type="entry name" value="D-tyrosyl-tRNA(Tyr) deacylase"/>
    <property type="match status" value="1"/>
</dbReference>
<dbReference type="HAMAP" id="MF_00518">
    <property type="entry name" value="Deacylase_Dtd"/>
    <property type="match status" value="1"/>
</dbReference>
<dbReference type="InterPro" id="IPR003732">
    <property type="entry name" value="Daa-tRNA_deacyls_DTD"/>
</dbReference>
<dbReference type="InterPro" id="IPR023509">
    <property type="entry name" value="DTD-like_sf"/>
</dbReference>
<dbReference type="NCBIfam" id="TIGR00256">
    <property type="entry name" value="D-aminoacyl-tRNA deacylase"/>
    <property type="match status" value="1"/>
</dbReference>
<dbReference type="PANTHER" id="PTHR10472:SF5">
    <property type="entry name" value="D-AMINOACYL-TRNA DEACYLASE 1"/>
    <property type="match status" value="1"/>
</dbReference>
<dbReference type="PANTHER" id="PTHR10472">
    <property type="entry name" value="D-TYROSYL-TRNA TYR DEACYLASE"/>
    <property type="match status" value="1"/>
</dbReference>
<dbReference type="Pfam" id="PF02580">
    <property type="entry name" value="Tyr_Deacylase"/>
    <property type="match status" value="1"/>
</dbReference>
<dbReference type="SUPFAM" id="SSF69500">
    <property type="entry name" value="DTD-like"/>
    <property type="match status" value="1"/>
</dbReference>
<sequence length="147" mass="16021">MKIIIQRVNQASVSIEDDVVGSIEKGLVLLVGIAPEDTTEDIAYAVRKITSMRIFSDDEGRMNLSIQDIKGSVLSISQFTLFADTKKGNRPAFTGAADPVKANQFYDIFNQELANHVSVETGQFGADMQVSLINDGPVTIVLDTKNK</sequence>
<name>DTD_STRA1</name>
<reference key="1">
    <citation type="journal article" date="2005" name="Proc. Natl. Acad. Sci. U.S.A.">
        <title>Genome analysis of multiple pathogenic isolates of Streptococcus agalactiae: implications for the microbial 'pan-genome'.</title>
        <authorList>
            <person name="Tettelin H."/>
            <person name="Masignani V."/>
            <person name="Cieslewicz M.J."/>
            <person name="Donati C."/>
            <person name="Medini D."/>
            <person name="Ward N.L."/>
            <person name="Angiuoli S.V."/>
            <person name="Crabtree J."/>
            <person name="Jones A.L."/>
            <person name="Durkin A.S."/>
            <person name="DeBoy R.T."/>
            <person name="Davidsen T.M."/>
            <person name="Mora M."/>
            <person name="Scarselli M."/>
            <person name="Margarit y Ros I."/>
            <person name="Peterson J.D."/>
            <person name="Hauser C.R."/>
            <person name="Sundaram J.P."/>
            <person name="Nelson W.C."/>
            <person name="Madupu R."/>
            <person name="Brinkac L.M."/>
            <person name="Dodson R.J."/>
            <person name="Rosovitz M.J."/>
            <person name="Sullivan S.A."/>
            <person name="Daugherty S.C."/>
            <person name="Haft D.H."/>
            <person name="Selengut J."/>
            <person name="Gwinn M.L."/>
            <person name="Zhou L."/>
            <person name="Zafar N."/>
            <person name="Khouri H."/>
            <person name="Radune D."/>
            <person name="Dimitrov G."/>
            <person name="Watkins K."/>
            <person name="O'Connor K.J."/>
            <person name="Smith S."/>
            <person name="Utterback T.R."/>
            <person name="White O."/>
            <person name="Rubens C.E."/>
            <person name="Grandi G."/>
            <person name="Madoff L.C."/>
            <person name="Kasper D.L."/>
            <person name="Telford J.L."/>
            <person name="Wessels M.R."/>
            <person name="Rappuoli R."/>
            <person name="Fraser C.M."/>
        </authorList>
    </citation>
    <scope>NUCLEOTIDE SEQUENCE [LARGE SCALE GENOMIC DNA]</scope>
    <source>
        <strain>ATCC 27591 / A909 / CDC SS700</strain>
    </source>
</reference>
<feature type="chain" id="PRO_0000259321" description="D-aminoacyl-tRNA deacylase">
    <location>
        <begin position="1"/>
        <end position="147"/>
    </location>
</feature>
<feature type="short sequence motif" description="Gly-cisPro motif, important for rejection of L-amino acids" evidence="1">
    <location>
        <begin position="136"/>
        <end position="137"/>
    </location>
</feature>
<keyword id="KW-0963">Cytoplasm</keyword>
<keyword id="KW-0378">Hydrolase</keyword>
<keyword id="KW-0694">RNA-binding</keyword>
<keyword id="KW-0820">tRNA-binding</keyword>